<name>CARA_CAUVC</name>
<sequence>MSQDLLPGVTGVLALADGAILQGVGCGAVGDAVGEVCFNTAMTGYQEILTDPSYMAQIVAFTFPHVGNVGVNGEDVEQITGVAETAARGALFRDVPTVQANWRADGDFDAWMKARGVVGLAGVDTRALTRKIRETGMPHGVIAHSPDGQFDLAALVAKAKAWAGLEGLDLAKDASTTQTFTWDEGLWSWPEGYAKLDKPKYEVVVIDYGVKRNILRALAHVGARATVVPASTSAEDILARNPDGVMLSNGPGDPAATGQYAVPEIQKLVASGKPVFGICLGHQMLALALGAKTVKMEQGHHGANHPVKDLTTGKVEIVSMNHGFTVDTASLPAPVKETHVSLFDGTNAGIALDGKPVFSVQHHPEASPGPTDSLYLFERFAGLMDAAK</sequence>
<organism>
    <name type="scientific">Caulobacter vibrioides (strain ATCC 19089 / CIP 103742 / CB 15)</name>
    <name type="common">Caulobacter crescentus</name>
    <dbReference type="NCBI Taxonomy" id="190650"/>
    <lineage>
        <taxon>Bacteria</taxon>
        <taxon>Pseudomonadati</taxon>
        <taxon>Pseudomonadota</taxon>
        <taxon>Alphaproteobacteria</taxon>
        <taxon>Caulobacterales</taxon>
        <taxon>Caulobacteraceae</taxon>
        <taxon>Caulobacter</taxon>
    </lineage>
</organism>
<protein>
    <recommendedName>
        <fullName evidence="1">Carbamoyl phosphate synthase small chain</fullName>
        <ecNumber evidence="1">6.3.5.5</ecNumber>
    </recommendedName>
    <alternativeName>
        <fullName evidence="1">Carbamoyl phosphate synthetase glutamine chain</fullName>
    </alternativeName>
</protein>
<keyword id="KW-0028">Amino-acid biosynthesis</keyword>
<keyword id="KW-0055">Arginine biosynthesis</keyword>
<keyword id="KW-0067">ATP-binding</keyword>
<keyword id="KW-0315">Glutamine amidotransferase</keyword>
<keyword id="KW-0436">Ligase</keyword>
<keyword id="KW-0547">Nucleotide-binding</keyword>
<keyword id="KW-0665">Pyrimidine biosynthesis</keyword>
<keyword id="KW-1185">Reference proteome</keyword>
<proteinExistence type="inferred from homology"/>
<gene>
    <name evidence="1" type="primary">carA</name>
    <name type="ordered locus">CC_2834</name>
</gene>
<evidence type="ECO:0000255" key="1">
    <source>
        <dbReference type="HAMAP-Rule" id="MF_01209"/>
    </source>
</evidence>
<dbReference type="EC" id="6.3.5.5" evidence="1"/>
<dbReference type="EMBL" id="AE005673">
    <property type="protein sequence ID" value="AAK24798.1"/>
    <property type="molecule type" value="Genomic_DNA"/>
</dbReference>
<dbReference type="PIR" id="B87600">
    <property type="entry name" value="B87600"/>
</dbReference>
<dbReference type="RefSeq" id="NP_421630.1">
    <property type="nucleotide sequence ID" value="NC_002696.2"/>
</dbReference>
<dbReference type="RefSeq" id="WP_010920674.1">
    <property type="nucleotide sequence ID" value="NC_002696.2"/>
</dbReference>
<dbReference type="SMR" id="Q9A4J7"/>
<dbReference type="STRING" id="190650.CC_2834"/>
<dbReference type="EnsemblBacteria" id="AAK24798">
    <property type="protein sequence ID" value="AAK24798"/>
    <property type="gene ID" value="CC_2834"/>
</dbReference>
<dbReference type="KEGG" id="ccr:CC_2834"/>
<dbReference type="PATRIC" id="fig|190650.5.peg.2836"/>
<dbReference type="eggNOG" id="COG0505">
    <property type="taxonomic scope" value="Bacteria"/>
</dbReference>
<dbReference type="HOGENOM" id="CLU_035901_2_2_5"/>
<dbReference type="BioCyc" id="CAULO:CC2834-MONOMER"/>
<dbReference type="UniPathway" id="UPA00068">
    <property type="reaction ID" value="UER00171"/>
</dbReference>
<dbReference type="UniPathway" id="UPA00070">
    <property type="reaction ID" value="UER00115"/>
</dbReference>
<dbReference type="Proteomes" id="UP000001816">
    <property type="component" value="Chromosome"/>
</dbReference>
<dbReference type="GO" id="GO:0005524">
    <property type="term" value="F:ATP binding"/>
    <property type="evidence" value="ECO:0007669"/>
    <property type="project" value="UniProtKB-UniRule"/>
</dbReference>
<dbReference type="GO" id="GO:0004088">
    <property type="term" value="F:carbamoyl-phosphate synthase (glutamine-hydrolyzing) activity"/>
    <property type="evidence" value="ECO:0007669"/>
    <property type="project" value="UniProtKB-UniRule"/>
</dbReference>
<dbReference type="GO" id="GO:0004359">
    <property type="term" value="F:glutaminase activity"/>
    <property type="evidence" value="ECO:0007669"/>
    <property type="project" value="RHEA"/>
</dbReference>
<dbReference type="GO" id="GO:0006207">
    <property type="term" value="P:'de novo' pyrimidine nucleobase biosynthetic process"/>
    <property type="evidence" value="ECO:0007669"/>
    <property type="project" value="InterPro"/>
</dbReference>
<dbReference type="GO" id="GO:0044205">
    <property type="term" value="P:'de novo' UMP biosynthetic process"/>
    <property type="evidence" value="ECO:0007669"/>
    <property type="project" value="UniProtKB-UniRule"/>
</dbReference>
<dbReference type="GO" id="GO:0006541">
    <property type="term" value="P:glutamine metabolic process"/>
    <property type="evidence" value="ECO:0007669"/>
    <property type="project" value="InterPro"/>
</dbReference>
<dbReference type="GO" id="GO:0006526">
    <property type="term" value="P:L-arginine biosynthetic process"/>
    <property type="evidence" value="ECO:0007669"/>
    <property type="project" value="UniProtKB-UniRule"/>
</dbReference>
<dbReference type="CDD" id="cd01744">
    <property type="entry name" value="GATase1_CPSase"/>
    <property type="match status" value="1"/>
</dbReference>
<dbReference type="Gene3D" id="3.40.50.880">
    <property type="match status" value="1"/>
</dbReference>
<dbReference type="Gene3D" id="3.50.30.20">
    <property type="entry name" value="Carbamoyl-phosphate synthase small subunit, N-terminal domain"/>
    <property type="match status" value="1"/>
</dbReference>
<dbReference type="HAMAP" id="MF_01209">
    <property type="entry name" value="CPSase_S_chain"/>
    <property type="match status" value="1"/>
</dbReference>
<dbReference type="InterPro" id="IPR050472">
    <property type="entry name" value="Anth_synth/Amidotransfase"/>
</dbReference>
<dbReference type="InterPro" id="IPR006274">
    <property type="entry name" value="CarbamoylP_synth_ssu"/>
</dbReference>
<dbReference type="InterPro" id="IPR002474">
    <property type="entry name" value="CarbamoylP_synth_ssu_N"/>
</dbReference>
<dbReference type="InterPro" id="IPR036480">
    <property type="entry name" value="CarbP_synth_ssu_N_sf"/>
</dbReference>
<dbReference type="InterPro" id="IPR029062">
    <property type="entry name" value="Class_I_gatase-like"/>
</dbReference>
<dbReference type="InterPro" id="IPR035686">
    <property type="entry name" value="CPSase_GATase1"/>
</dbReference>
<dbReference type="InterPro" id="IPR017926">
    <property type="entry name" value="GATASE"/>
</dbReference>
<dbReference type="NCBIfam" id="TIGR01368">
    <property type="entry name" value="CPSaseIIsmall"/>
    <property type="match status" value="1"/>
</dbReference>
<dbReference type="NCBIfam" id="NF009475">
    <property type="entry name" value="PRK12838.1"/>
    <property type="match status" value="1"/>
</dbReference>
<dbReference type="PANTHER" id="PTHR43418:SF7">
    <property type="entry name" value="CARBAMOYL-PHOSPHATE SYNTHASE SMALL CHAIN"/>
    <property type="match status" value="1"/>
</dbReference>
<dbReference type="PANTHER" id="PTHR43418">
    <property type="entry name" value="MULTIFUNCTIONAL TRYPTOPHAN BIOSYNTHESIS PROTEIN-RELATED"/>
    <property type="match status" value="1"/>
</dbReference>
<dbReference type="Pfam" id="PF00988">
    <property type="entry name" value="CPSase_sm_chain"/>
    <property type="match status" value="1"/>
</dbReference>
<dbReference type="Pfam" id="PF00117">
    <property type="entry name" value="GATase"/>
    <property type="match status" value="1"/>
</dbReference>
<dbReference type="PRINTS" id="PR00097">
    <property type="entry name" value="ANTSNTHASEII"/>
</dbReference>
<dbReference type="PRINTS" id="PR00099">
    <property type="entry name" value="CPSGATASE"/>
</dbReference>
<dbReference type="PRINTS" id="PR00096">
    <property type="entry name" value="GATASE"/>
</dbReference>
<dbReference type="SMART" id="SM01097">
    <property type="entry name" value="CPSase_sm_chain"/>
    <property type="match status" value="1"/>
</dbReference>
<dbReference type="SUPFAM" id="SSF52021">
    <property type="entry name" value="Carbamoyl phosphate synthetase, small subunit N-terminal domain"/>
    <property type="match status" value="1"/>
</dbReference>
<dbReference type="SUPFAM" id="SSF52317">
    <property type="entry name" value="Class I glutamine amidotransferase-like"/>
    <property type="match status" value="1"/>
</dbReference>
<dbReference type="PROSITE" id="PS51273">
    <property type="entry name" value="GATASE_TYPE_1"/>
    <property type="match status" value="1"/>
</dbReference>
<accession>Q9A4J7</accession>
<feature type="chain" id="PRO_0000112265" description="Carbamoyl phosphate synthase small chain">
    <location>
        <begin position="1"/>
        <end position="388"/>
    </location>
</feature>
<feature type="domain" description="Glutamine amidotransferase type-1" evidence="1">
    <location>
        <begin position="202"/>
        <end position="388"/>
    </location>
</feature>
<feature type="region of interest" description="CPSase" evidence="1">
    <location>
        <begin position="1"/>
        <end position="198"/>
    </location>
</feature>
<feature type="active site" description="Nucleophile" evidence="1">
    <location>
        <position position="279"/>
    </location>
</feature>
<feature type="active site" evidence="1">
    <location>
        <position position="363"/>
    </location>
</feature>
<feature type="active site" evidence="1">
    <location>
        <position position="365"/>
    </location>
</feature>
<feature type="binding site" evidence="1">
    <location>
        <position position="53"/>
    </location>
    <ligand>
        <name>L-glutamine</name>
        <dbReference type="ChEBI" id="CHEBI:58359"/>
    </ligand>
</feature>
<feature type="binding site" evidence="1">
    <location>
        <position position="250"/>
    </location>
    <ligand>
        <name>L-glutamine</name>
        <dbReference type="ChEBI" id="CHEBI:58359"/>
    </ligand>
</feature>
<feature type="binding site" evidence="1">
    <location>
        <position position="252"/>
    </location>
    <ligand>
        <name>L-glutamine</name>
        <dbReference type="ChEBI" id="CHEBI:58359"/>
    </ligand>
</feature>
<feature type="binding site" evidence="1">
    <location>
        <position position="280"/>
    </location>
    <ligand>
        <name>L-glutamine</name>
        <dbReference type="ChEBI" id="CHEBI:58359"/>
    </ligand>
</feature>
<feature type="binding site" evidence="1">
    <location>
        <position position="283"/>
    </location>
    <ligand>
        <name>L-glutamine</name>
        <dbReference type="ChEBI" id="CHEBI:58359"/>
    </ligand>
</feature>
<feature type="binding site" evidence="1">
    <location>
        <position position="321"/>
    </location>
    <ligand>
        <name>L-glutamine</name>
        <dbReference type="ChEBI" id="CHEBI:58359"/>
    </ligand>
</feature>
<feature type="binding site" evidence="1">
    <location>
        <position position="323"/>
    </location>
    <ligand>
        <name>L-glutamine</name>
        <dbReference type="ChEBI" id="CHEBI:58359"/>
    </ligand>
</feature>
<feature type="binding site" evidence="1">
    <location>
        <position position="324"/>
    </location>
    <ligand>
        <name>L-glutamine</name>
        <dbReference type="ChEBI" id="CHEBI:58359"/>
    </ligand>
</feature>
<reference key="1">
    <citation type="journal article" date="2001" name="Proc. Natl. Acad. Sci. U.S.A.">
        <title>Complete genome sequence of Caulobacter crescentus.</title>
        <authorList>
            <person name="Nierman W.C."/>
            <person name="Feldblyum T.V."/>
            <person name="Laub M.T."/>
            <person name="Paulsen I.T."/>
            <person name="Nelson K.E."/>
            <person name="Eisen J.A."/>
            <person name="Heidelberg J.F."/>
            <person name="Alley M.R.K."/>
            <person name="Ohta N."/>
            <person name="Maddock J.R."/>
            <person name="Potocka I."/>
            <person name="Nelson W.C."/>
            <person name="Newton A."/>
            <person name="Stephens C."/>
            <person name="Phadke N.D."/>
            <person name="Ely B."/>
            <person name="DeBoy R.T."/>
            <person name="Dodson R.J."/>
            <person name="Durkin A.S."/>
            <person name="Gwinn M.L."/>
            <person name="Haft D.H."/>
            <person name="Kolonay J.F."/>
            <person name="Smit J."/>
            <person name="Craven M.B."/>
            <person name="Khouri H.M."/>
            <person name="Shetty J."/>
            <person name="Berry K.J."/>
            <person name="Utterback T.R."/>
            <person name="Tran K."/>
            <person name="Wolf A.M."/>
            <person name="Vamathevan J.J."/>
            <person name="Ermolaeva M.D."/>
            <person name="White O."/>
            <person name="Salzberg S.L."/>
            <person name="Venter J.C."/>
            <person name="Shapiro L."/>
            <person name="Fraser C.M."/>
        </authorList>
    </citation>
    <scope>NUCLEOTIDE SEQUENCE [LARGE SCALE GENOMIC DNA]</scope>
    <source>
        <strain>ATCC 19089 / CIP 103742 / CB 15</strain>
    </source>
</reference>
<comment type="function">
    <text evidence="1">Small subunit of the glutamine-dependent carbamoyl phosphate synthetase (CPSase). CPSase catalyzes the formation of carbamoyl phosphate from the ammonia moiety of glutamine, carbonate, and phosphate donated by ATP, constituting the first step of 2 biosynthetic pathways, one leading to arginine and/or urea and the other to pyrimidine nucleotides. The small subunit (glutamine amidotransferase) binds and cleaves glutamine to supply the large subunit with the substrate ammonia.</text>
</comment>
<comment type="catalytic activity">
    <reaction evidence="1">
        <text>hydrogencarbonate + L-glutamine + 2 ATP + H2O = carbamoyl phosphate + L-glutamate + 2 ADP + phosphate + 2 H(+)</text>
        <dbReference type="Rhea" id="RHEA:18633"/>
        <dbReference type="ChEBI" id="CHEBI:15377"/>
        <dbReference type="ChEBI" id="CHEBI:15378"/>
        <dbReference type="ChEBI" id="CHEBI:17544"/>
        <dbReference type="ChEBI" id="CHEBI:29985"/>
        <dbReference type="ChEBI" id="CHEBI:30616"/>
        <dbReference type="ChEBI" id="CHEBI:43474"/>
        <dbReference type="ChEBI" id="CHEBI:58228"/>
        <dbReference type="ChEBI" id="CHEBI:58359"/>
        <dbReference type="ChEBI" id="CHEBI:456216"/>
        <dbReference type="EC" id="6.3.5.5"/>
    </reaction>
</comment>
<comment type="catalytic activity">
    <molecule>Carbamoyl phosphate synthase small chain</molecule>
    <reaction evidence="1">
        <text>L-glutamine + H2O = L-glutamate + NH4(+)</text>
        <dbReference type="Rhea" id="RHEA:15889"/>
        <dbReference type="ChEBI" id="CHEBI:15377"/>
        <dbReference type="ChEBI" id="CHEBI:28938"/>
        <dbReference type="ChEBI" id="CHEBI:29985"/>
        <dbReference type="ChEBI" id="CHEBI:58359"/>
    </reaction>
</comment>
<comment type="pathway">
    <text evidence="1">Amino-acid biosynthesis; L-arginine biosynthesis; carbamoyl phosphate from bicarbonate: step 1/1.</text>
</comment>
<comment type="pathway">
    <text evidence="1">Pyrimidine metabolism; UMP biosynthesis via de novo pathway; (S)-dihydroorotate from bicarbonate: step 1/3.</text>
</comment>
<comment type="subunit">
    <text evidence="1">Composed of two chains; the small (or glutamine) chain promotes the hydrolysis of glutamine to ammonia, which is used by the large (or ammonia) chain to synthesize carbamoyl phosphate. Tetramer of heterodimers (alpha,beta)4.</text>
</comment>
<comment type="similarity">
    <text evidence="1">Belongs to the CarA family.</text>
</comment>